<comment type="function">
    <text evidence="1">Catalyzes the anti-1,4-elimination of the C-3 phosphate and the C-6 proR hydrogen from 5-enolpyruvylshikimate-3-phosphate (EPSP) to yield chorismate, which is the branch point compound that serves as the starting substrate for the three terminal pathways of aromatic amino acid biosynthesis. This reaction introduces a second double bond into the aromatic ring system.</text>
</comment>
<comment type="catalytic activity">
    <reaction evidence="1">
        <text>5-O-(1-carboxyvinyl)-3-phosphoshikimate = chorismate + phosphate</text>
        <dbReference type="Rhea" id="RHEA:21020"/>
        <dbReference type="ChEBI" id="CHEBI:29748"/>
        <dbReference type="ChEBI" id="CHEBI:43474"/>
        <dbReference type="ChEBI" id="CHEBI:57701"/>
        <dbReference type="EC" id="4.2.3.5"/>
    </reaction>
</comment>
<comment type="cofactor">
    <cofactor evidence="1">
        <name>FMNH2</name>
        <dbReference type="ChEBI" id="CHEBI:57618"/>
    </cofactor>
    <text evidence="1">Reduced FMN (FMNH(2)).</text>
</comment>
<comment type="pathway">
    <text evidence="1">Metabolic intermediate biosynthesis; chorismate biosynthesis; chorismate from D-erythrose 4-phosphate and phosphoenolpyruvate: step 7/7.</text>
</comment>
<comment type="subunit">
    <text evidence="1">Homotetramer.</text>
</comment>
<comment type="similarity">
    <text evidence="1">Belongs to the chorismate synthase family.</text>
</comment>
<sequence length="362" mass="39339">MGNTFGHLFRITTFGESHGGGVGVVIDGCPPLLEISPEEIQLELDRRRPGQSKITTPRKEADTCEILSGVYEGKTLGTPISILVRNKDTRPQDYDEMAQKYRPSHADATYDAKYGIRNWQGGGRSSARETIGRVAAGAIAKKILRQVANVEVIGYVKRIKDLEGVVDPNTVTLDQVESNIVRCPDGELADRMIELIEQTGRQGDSIGGVVECVARNVPKGLGEPVFDKLEADIAKAVMSLPASKGFEIGSGFAGTLLTGFEHNDEYYIDENGEIRTVTNRSGGIQGGIANGENIILRVAFKPTATIRKEQKTVTREGEETLLAAKGRHDPCVLPRAVPMVEAMVALVLCDHLLRHHGQCKVL</sequence>
<dbReference type="EC" id="4.2.3.5" evidence="1"/>
<dbReference type="EMBL" id="CP000117">
    <property type="protein sequence ID" value="ABA20213.1"/>
    <property type="molecule type" value="Genomic_DNA"/>
</dbReference>
<dbReference type="RefSeq" id="WP_010994971.1">
    <property type="nucleotide sequence ID" value="NC_007413.1"/>
</dbReference>
<dbReference type="SMR" id="Q3MFM3"/>
<dbReference type="STRING" id="240292.Ava_0589"/>
<dbReference type="GeneID" id="58723247"/>
<dbReference type="KEGG" id="ava:Ava_0589"/>
<dbReference type="eggNOG" id="COG0082">
    <property type="taxonomic scope" value="Bacteria"/>
</dbReference>
<dbReference type="HOGENOM" id="CLU_034547_0_1_3"/>
<dbReference type="UniPathway" id="UPA00053">
    <property type="reaction ID" value="UER00090"/>
</dbReference>
<dbReference type="Proteomes" id="UP000002533">
    <property type="component" value="Chromosome"/>
</dbReference>
<dbReference type="GO" id="GO:0005829">
    <property type="term" value="C:cytosol"/>
    <property type="evidence" value="ECO:0007669"/>
    <property type="project" value="TreeGrafter"/>
</dbReference>
<dbReference type="GO" id="GO:0004107">
    <property type="term" value="F:chorismate synthase activity"/>
    <property type="evidence" value="ECO:0007669"/>
    <property type="project" value="UniProtKB-UniRule"/>
</dbReference>
<dbReference type="GO" id="GO:0010181">
    <property type="term" value="F:FMN binding"/>
    <property type="evidence" value="ECO:0007669"/>
    <property type="project" value="TreeGrafter"/>
</dbReference>
<dbReference type="GO" id="GO:0008652">
    <property type="term" value="P:amino acid biosynthetic process"/>
    <property type="evidence" value="ECO:0007669"/>
    <property type="project" value="UniProtKB-KW"/>
</dbReference>
<dbReference type="GO" id="GO:0009073">
    <property type="term" value="P:aromatic amino acid family biosynthetic process"/>
    <property type="evidence" value="ECO:0007669"/>
    <property type="project" value="UniProtKB-KW"/>
</dbReference>
<dbReference type="GO" id="GO:0009423">
    <property type="term" value="P:chorismate biosynthetic process"/>
    <property type="evidence" value="ECO:0007669"/>
    <property type="project" value="UniProtKB-UniRule"/>
</dbReference>
<dbReference type="CDD" id="cd07304">
    <property type="entry name" value="Chorismate_synthase"/>
    <property type="match status" value="1"/>
</dbReference>
<dbReference type="FunFam" id="3.60.150.10:FF:000003">
    <property type="entry name" value="Chorismate synthase"/>
    <property type="match status" value="1"/>
</dbReference>
<dbReference type="Gene3D" id="3.60.150.10">
    <property type="entry name" value="Chorismate synthase AroC"/>
    <property type="match status" value="1"/>
</dbReference>
<dbReference type="HAMAP" id="MF_00300">
    <property type="entry name" value="Chorismate_synth"/>
    <property type="match status" value="1"/>
</dbReference>
<dbReference type="InterPro" id="IPR000453">
    <property type="entry name" value="Chorismate_synth"/>
</dbReference>
<dbReference type="InterPro" id="IPR035904">
    <property type="entry name" value="Chorismate_synth_AroC_sf"/>
</dbReference>
<dbReference type="InterPro" id="IPR020541">
    <property type="entry name" value="Chorismate_synthase_CS"/>
</dbReference>
<dbReference type="NCBIfam" id="TIGR00033">
    <property type="entry name" value="aroC"/>
    <property type="match status" value="1"/>
</dbReference>
<dbReference type="NCBIfam" id="NF003793">
    <property type="entry name" value="PRK05382.1"/>
    <property type="match status" value="1"/>
</dbReference>
<dbReference type="PANTHER" id="PTHR21085">
    <property type="entry name" value="CHORISMATE SYNTHASE"/>
    <property type="match status" value="1"/>
</dbReference>
<dbReference type="PANTHER" id="PTHR21085:SF0">
    <property type="entry name" value="CHORISMATE SYNTHASE"/>
    <property type="match status" value="1"/>
</dbReference>
<dbReference type="Pfam" id="PF01264">
    <property type="entry name" value="Chorismate_synt"/>
    <property type="match status" value="1"/>
</dbReference>
<dbReference type="PIRSF" id="PIRSF001456">
    <property type="entry name" value="Chorismate_synth"/>
    <property type="match status" value="1"/>
</dbReference>
<dbReference type="SUPFAM" id="SSF103263">
    <property type="entry name" value="Chorismate synthase, AroC"/>
    <property type="match status" value="1"/>
</dbReference>
<dbReference type="PROSITE" id="PS00787">
    <property type="entry name" value="CHORISMATE_SYNTHASE_1"/>
    <property type="match status" value="1"/>
</dbReference>
<dbReference type="PROSITE" id="PS00788">
    <property type="entry name" value="CHORISMATE_SYNTHASE_2"/>
    <property type="match status" value="1"/>
</dbReference>
<dbReference type="PROSITE" id="PS00789">
    <property type="entry name" value="CHORISMATE_SYNTHASE_3"/>
    <property type="match status" value="1"/>
</dbReference>
<proteinExistence type="inferred from homology"/>
<accession>Q3MFM3</accession>
<keyword id="KW-0028">Amino-acid biosynthesis</keyword>
<keyword id="KW-0057">Aromatic amino acid biosynthesis</keyword>
<keyword id="KW-0274">FAD</keyword>
<keyword id="KW-0285">Flavoprotein</keyword>
<keyword id="KW-0288">FMN</keyword>
<keyword id="KW-0456">Lyase</keyword>
<keyword id="KW-0521">NADP</keyword>
<protein>
    <recommendedName>
        <fullName evidence="1">Chorismate synthase</fullName>
        <shortName evidence="1">CS</shortName>
        <ecNumber evidence="1">4.2.3.5</ecNumber>
    </recommendedName>
    <alternativeName>
        <fullName evidence="1">5-enolpyruvylshikimate-3-phosphate phospholyase</fullName>
    </alternativeName>
</protein>
<feature type="chain" id="PRO_0000256270" description="Chorismate synthase">
    <location>
        <begin position="1"/>
        <end position="362"/>
    </location>
</feature>
<feature type="binding site" evidence="1">
    <location>
        <position position="47"/>
    </location>
    <ligand>
        <name>NADP(+)</name>
        <dbReference type="ChEBI" id="CHEBI:58349"/>
    </ligand>
</feature>
<feature type="binding site" evidence="1">
    <location>
        <begin position="124"/>
        <end position="126"/>
    </location>
    <ligand>
        <name>FMN</name>
        <dbReference type="ChEBI" id="CHEBI:58210"/>
    </ligand>
</feature>
<feature type="binding site" evidence="1">
    <location>
        <position position="286"/>
    </location>
    <ligand>
        <name>FMN</name>
        <dbReference type="ChEBI" id="CHEBI:58210"/>
    </ligand>
</feature>
<feature type="binding site" evidence="1">
    <location>
        <begin position="301"/>
        <end position="305"/>
    </location>
    <ligand>
        <name>FMN</name>
        <dbReference type="ChEBI" id="CHEBI:58210"/>
    </ligand>
</feature>
<feature type="binding site" evidence="1">
    <location>
        <position position="327"/>
    </location>
    <ligand>
        <name>FMN</name>
        <dbReference type="ChEBI" id="CHEBI:58210"/>
    </ligand>
</feature>
<evidence type="ECO:0000255" key="1">
    <source>
        <dbReference type="HAMAP-Rule" id="MF_00300"/>
    </source>
</evidence>
<organism>
    <name type="scientific">Trichormus variabilis (strain ATCC 29413 / PCC 7937)</name>
    <name type="common">Anabaena variabilis</name>
    <dbReference type="NCBI Taxonomy" id="240292"/>
    <lineage>
        <taxon>Bacteria</taxon>
        <taxon>Bacillati</taxon>
        <taxon>Cyanobacteriota</taxon>
        <taxon>Cyanophyceae</taxon>
        <taxon>Nostocales</taxon>
        <taxon>Nostocaceae</taxon>
        <taxon>Trichormus</taxon>
    </lineage>
</organism>
<name>AROC_TRIV2</name>
<reference key="1">
    <citation type="journal article" date="2014" name="Stand. Genomic Sci.">
        <title>Complete genome sequence of Anabaena variabilis ATCC 29413.</title>
        <authorList>
            <person name="Thiel T."/>
            <person name="Pratte B.S."/>
            <person name="Zhong J."/>
            <person name="Goodwin L."/>
            <person name="Copeland A."/>
            <person name="Lucas S."/>
            <person name="Han C."/>
            <person name="Pitluck S."/>
            <person name="Land M.L."/>
            <person name="Kyrpides N.C."/>
            <person name="Woyke T."/>
        </authorList>
    </citation>
    <scope>NUCLEOTIDE SEQUENCE [LARGE SCALE GENOMIC DNA]</scope>
    <source>
        <strain>ATCC 29413 / PCC 7937</strain>
    </source>
</reference>
<gene>
    <name evidence="1" type="primary">aroC</name>
    <name type="ordered locus">Ava_0589</name>
</gene>